<reference key="1">
    <citation type="journal article" date="2000" name="Nature">
        <title>Sequence and analysis of chromosome 1 of the plant Arabidopsis thaliana.</title>
        <authorList>
            <person name="Theologis A."/>
            <person name="Ecker J.R."/>
            <person name="Palm C.J."/>
            <person name="Federspiel N.A."/>
            <person name="Kaul S."/>
            <person name="White O."/>
            <person name="Alonso J."/>
            <person name="Altafi H."/>
            <person name="Araujo R."/>
            <person name="Bowman C.L."/>
            <person name="Brooks S.Y."/>
            <person name="Buehler E."/>
            <person name="Chan A."/>
            <person name="Chao Q."/>
            <person name="Chen H."/>
            <person name="Cheuk R.F."/>
            <person name="Chin C.W."/>
            <person name="Chung M.K."/>
            <person name="Conn L."/>
            <person name="Conway A.B."/>
            <person name="Conway A.R."/>
            <person name="Creasy T.H."/>
            <person name="Dewar K."/>
            <person name="Dunn P."/>
            <person name="Etgu P."/>
            <person name="Feldblyum T.V."/>
            <person name="Feng J.-D."/>
            <person name="Fong B."/>
            <person name="Fujii C.Y."/>
            <person name="Gill J.E."/>
            <person name="Goldsmith A.D."/>
            <person name="Haas B."/>
            <person name="Hansen N.F."/>
            <person name="Hughes B."/>
            <person name="Huizar L."/>
            <person name="Hunter J.L."/>
            <person name="Jenkins J."/>
            <person name="Johnson-Hopson C."/>
            <person name="Khan S."/>
            <person name="Khaykin E."/>
            <person name="Kim C.J."/>
            <person name="Koo H.L."/>
            <person name="Kremenetskaia I."/>
            <person name="Kurtz D.B."/>
            <person name="Kwan A."/>
            <person name="Lam B."/>
            <person name="Langin-Hooper S."/>
            <person name="Lee A."/>
            <person name="Lee J.M."/>
            <person name="Lenz C.A."/>
            <person name="Li J.H."/>
            <person name="Li Y.-P."/>
            <person name="Lin X."/>
            <person name="Liu S.X."/>
            <person name="Liu Z.A."/>
            <person name="Luros J.S."/>
            <person name="Maiti R."/>
            <person name="Marziali A."/>
            <person name="Militscher J."/>
            <person name="Miranda M."/>
            <person name="Nguyen M."/>
            <person name="Nierman W.C."/>
            <person name="Osborne B.I."/>
            <person name="Pai G."/>
            <person name="Peterson J."/>
            <person name="Pham P.K."/>
            <person name="Rizzo M."/>
            <person name="Rooney T."/>
            <person name="Rowley D."/>
            <person name="Sakano H."/>
            <person name="Salzberg S.L."/>
            <person name="Schwartz J.R."/>
            <person name="Shinn P."/>
            <person name="Southwick A.M."/>
            <person name="Sun H."/>
            <person name="Tallon L.J."/>
            <person name="Tambunga G."/>
            <person name="Toriumi M.J."/>
            <person name="Town C.D."/>
            <person name="Utterback T."/>
            <person name="Van Aken S."/>
            <person name="Vaysberg M."/>
            <person name="Vysotskaia V.S."/>
            <person name="Walker M."/>
            <person name="Wu D."/>
            <person name="Yu G."/>
            <person name="Fraser C.M."/>
            <person name="Venter J.C."/>
            <person name="Davis R.W."/>
        </authorList>
    </citation>
    <scope>NUCLEOTIDE SEQUENCE [LARGE SCALE GENOMIC DNA]</scope>
    <source>
        <strain>cv. Columbia</strain>
    </source>
</reference>
<reference key="2">
    <citation type="journal article" date="2017" name="Plant J.">
        <title>Araport11: a complete reannotation of the Arabidopsis thaliana reference genome.</title>
        <authorList>
            <person name="Cheng C.Y."/>
            <person name="Krishnakumar V."/>
            <person name="Chan A.P."/>
            <person name="Thibaud-Nissen F."/>
            <person name="Schobel S."/>
            <person name="Town C.D."/>
        </authorList>
    </citation>
    <scope>GENOME REANNOTATION</scope>
    <source>
        <strain>cv. Columbia</strain>
    </source>
</reference>
<reference key="3">
    <citation type="submission" date="2006-07" db="EMBL/GenBank/DDBJ databases">
        <title>Large-scale analysis of RIKEN Arabidopsis full-length (RAFL) cDNAs.</title>
        <authorList>
            <person name="Totoki Y."/>
            <person name="Seki M."/>
            <person name="Ishida J."/>
            <person name="Nakajima M."/>
            <person name="Enju A."/>
            <person name="Kamiya A."/>
            <person name="Narusaka M."/>
            <person name="Shin-i T."/>
            <person name="Nakagawa M."/>
            <person name="Sakamoto N."/>
            <person name="Oishi K."/>
            <person name="Kohara Y."/>
            <person name="Kobayashi M."/>
            <person name="Toyoda A."/>
            <person name="Sakaki Y."/>
            <person name="Sakurai T."/>
            <person name="Iida K."/>
            <person name="Akiyama K."/>
            <person name="Satou M."/>
            <person name="Toyoda T."/>
            <person name="Konagaya A."/>
            <person name="Carninci P."/>
            <person name="Kawai J."/>
            <person name="Hayashizaki Y."/>
            <person name="Shinozaki K."/>
        </authorList>
    </citation>
    <scope>NUCLEOTIDE SEQUENCE [LARGE SCALE MRNA]</scope>
    <source>
        <strain>cv. Columbia</strain>
    </source>
</reference>
<reference key="4">
    <citation type="journal article" date="2006" name="Plant Cell">
        <title>Plant retromer, localized to the prevacuolar compartment and microvesicles in Arabidopsis, may interact with vacuolar sorting receptors.</title>
        <authorList>
            <person name="Oliviusson P."/>
            <person name="Heinzerling O."/>
            <person name="Hillmer S."/>
            <person name="Hinz G."/>
            <person name="Tse Y.C."/>
            <person name="Jiang L."/>
            <person name="Robinson D.G."/>
        </authorList>
    </citation>
    <scope>COMPONENT OF THE RETROMER COMPLEX</scope>
    <scope>SUBCELLULAR LOCATION</scope>
</reference>
<reference key="5">
    <citation type="journal article" date="2008" name="Plant Cell Physiol.">
        <title>Arabidopsis VPS35, a retromer component, is required for vacuolar protein sorting and involved in plant growth and leaf senescence.</title>
        <authorList>
            <person name="Yamazaki M."/>
            <person name="Shimada T."/>
            <person name="Takahashi H."/>
            <person name="Tamura K."/>
            <person name="Kondo M."/>
            <person name="Nishimura M."/>
            <person name="Hara-Nishimura I."/>
        </authorList>
    </citation>
    <scope>TISSUE SPECIFICITY</scope>
    <scope>FUNCTION</scope>
    <scope>SUBCELLULAR LOCATION</scope>
</reference>
<proteinExistence type="evidence at protein level"/>
<dbReference type="EMBL" id="AC007396">
    <property type="protein sequence ID" value="AAF26771.2"/>
    <property type="status" value="ALT_SEQ"/>
    <property type="molecule type" value="Genomic_DNA"/>
</dbReference>
<dbReference type="EMBL" id="CP002684">
    <property type="protein sequence ID" value="AEE35765.1"/>
    <property type="molecule type" value="Genomic_DNA"/>
</dbReference>
<dbReference type="EMBL" id="AK228153">
    <property type="protein sequence ID" value="BAF00109.1"/>
    <property type="molecule type" value="mRNA"/>
</dbReference>
<dbReference type="PIR" id="G96787">
    <property type="entry name" value="G96787"/>
</dbReference>
<dbReference type="RefSeq" id="NP_177713.3">
    <property type="nucleotide sequence ID" value="NM_106235.5"/>
</dbReference>
<dbReference type="SMR" id="F4I0P8"/>
<dbReference type="BioGRID" id="29137">
    <property type="interactions" value="4"/>
</dbReference>
<dbReference type="FunCoup" id="F4I0P8">
    <property type="interactions" value="5084"/>
</dbReference>
<dbReference type="IntAct" id="F4I0P8">
    <property type="interactions" value="1"/>
</dbReference>
<dbReference type="STRING" id="3702.F4I0P8"/>
<dbReference type="PaxDb" id="3702-AT1G75850.1"/>
<dbReference type="ProteomicsDB" id="242702"/>
<dbReference type="EnsemblPlants" id="AT1G75850.1">
    <property type="protein sequence ID" value="AT1G75850.1"/>
    <property type="gene ID" value="AT1G75850"/>
</dbReference>
<dbReference type="GeneID" id="843918"/>
<dbReference type="Gramene" id="AT1G75850.1">
    <property type="protein sequence ID" value="AT1G75850.1"/>
    <property type="gene ID" value="AT1G75850"/>
</dbReference>
<dbReference type="KEGG" id="ath:AT1G75850"/>
<dbReference type="Araport" id="AT1G75850"/>
<dbReference type="TAIR" id="AT1G75850">
    <property type="gene designation" value="VPS35B"/>
</dbReference>
<dbReference type="eggNOG" id="KOG1107">
    <property type="taxonomic scope" value="Eukaryota"/>
</dbReference>
<dbReference type="HOGENOM" id="CLU_005836_1_0_1"/>
<dbReference type="InParanoid" id="F4I0P8"/>
<dbReference type="OMA" id="YIRSREY"/>
<dbReference type="PRO" id="PR:F4I0P8"/>
<dbReference type="Proteomes" id="UP000006548">
    <property type="component" value="Chromosome 1"/>
</dbReference>
<dbReference type="ExpressionAtlas" id="F4I0P8">
    <property type="expression patterns" value="baseline and differential"/>
</dbReference>
<dbReference type="GO" id="GO:0005829">
    <property type="term" value="C:cytosol"/>
    <property type="evidence" value="ECO:0007669"/>
    <property type="project" value="GOC"/>
</dbReference>
<dbReference type="GO" id="GO:0010008">
    <property type="term" value="C:endosome membrane"/>
    <property type="evidence" value="ECO:0007669"/>
    <property type="project" value="UniProtKB-SubCell"/>
</dbReference>
<dbReference type="GO" id="GO:0005794">
    <property type="term" value="C:Golgi apparatus"/>
    <property type="evidence" value="ECO:0007669"/>
    <property type="project" value="UniProtKB-SubCell"/>
</dbReference>
<dbReference type="GO" id="GO:0030906">
    <property type="term" value="C:retromer, cargo-selective complex"/>
    <property type="evidence" value="ECO:0007669"/>
    <property type="project" value="InterPro"/>
</dbReference>
<dbReference type="GO" id="GO:0015031">
    <property type="term" value="P:protein transport"/>
    <property type="evidence" value="ECO:0007669"/>
    <property type="project" value="UniProtKB-KW"/>
</dbReference>
<dbReference type="GO" id="GO:0042147">
    <property type="term" value="P:retrograde transport, endosome to Golgi"/>
    <property type="evidence" value="ECO:0007669"/>
    <property type="project" value="InterPro"/>
</dbReference>
<dbReference type="FunFam" id="1.25.40.660:FF:000003">
    <property type="entry name" value="Vacuolar protein sorting-associated protein 35"/>
    <property type="match status" value="1"/>
</dbReference>
<dbReference type="Gene3D" id="1.25.40.660">
    <property type="entry name" value="Vacuolar protein sorting-associated protein 35, helical subcomplex Vps35-C"/>
    <property type="match status" value="1"/>
</dbReference>
<dbReference type="InterPro" id="IPR016024">
    <property type="entry name" value="ARM-type_fold"/>
</dbReference>
<dbReference type="InterPro" id="IPR005378">
    <property type="entry name" value="Vps35"/>
</dbReference>
<dbReference type="InterPro" id="IPR042491">
    <property type="entry name" value="Vps35_C"/>
</dbReference>
<dbReference type="PANTHER" id="PTHR11099:SF6">
    <property type="entry name" value="VACUOLAR PROTEIN SORTING-ASSOCIATED PROTEIN 35B"/>
    <property type="match status" value="1"/>
</dbReference>
<dbReference type="PANTHER" id="PTHR11099">
    <property type="entry name" value="VACUOLAR SORTING PROTEIN 35"/>
    <property type="match status" value="1"/>
</dbReference>
<dbReference type="Pfam" id="PF03635">
    <property type="entry name" value="Vps35"/>
    <property type="match status" value="1"/>
</dbReference>
<dbReference type="PIRSF" id="PIRSF009375">
    <property type="entry name" value="Retromer_Vps35"/>
    <property type="match status" value="1"/>
</dbReference>
<dbReference type="SUPFAM" id="SSF48371">
    <property type="entry name" value="ARM repeat"/>
    <property type="match status" value="1"/>
</dbReference>
<comment type="function">
    <text evidence="2">Plays a role in vesicular protein sorting. Component of the membrane-associated retromer complex which is essential in endosome-to-Golgi retrograde transport. Also involved in the efficient sorting of seed storage proteins globulin 12S and albumin 2S. The VPS29-VPS26-VPS35 subcomplex may be involved in recycling of specific cargos from endosome to the plasma membrane.</text>
</comment>
<comment type="subunit">
    <text>Component of the retromer complex which consists of VPS29 (MAG1), VPS26 (VPS26A or VPS26B), VPS35 (VPS35A or VPS35B or VPS35C), VPS5/17 (SNX1 or SNX2A or SNX2B). Component of a retromer subcomplex consisting of VPS29 (MAG1), VPS26 (VPS26A or VPS26B), VPS35 (VPS35A or VPS35B or VPS35C).</text>
</comment>
<comment type="subcellular location">
    <subcellularLocation>
        <location>Cytoplasm</location>
    </subcellularLocation>
    <subcellularLocation>
        <location>Endosome membrane</location>
        <topology>Peripheral membrane protein</topology>
        <orientation>Cytoplasmic side</orientation>
    </subcellularLocation>
    <subcellularLocation>
        <location>Prevacuolar compartment membrane</location>
        <topology>Peripheral membrane protein</topology>
        <orientation>Cytoplasmic side</orientation>
    </subcellularLocation>
    <subcellularLocation>
        <location evidence="1">Golgi apparatus</location>
        <location evidence="1">trans-Golgi network membrane</location>
        <topology evidence="1">Peripheral membrane protein</topology>
        <orientation evidence="1">Cytoplasmic side</orientation>
    </subcellularLocation>
</comment>
<comment type="tissue specificity">
    <text evidence="2">Expressed in siliques and maturing seeds (at protein level).</text>
</comment>
<comment type="similarity">
    <text evidence="3">Belongs to the VPS35 family.</text>
</comment>
<comment type="sequence caution" evidence="3">
    <conflict type="erroneous gene model prediction">
        <sequence resource="EMBL-CDS" id="AAF26771"/>
    </conflict>
</comment>
<protein>
    <recommendedName>
        <fullName>Vacuolar protein sorting-associated protein 35B</fullName>
    </recommendedName>
    <alternativeName>
        <fullName>Vesicle protein sorting 35B</fullName>
    </alternativeName>
</protein>
<name>VP35B_ARATH</name>
<sequence>MRTLAGVEDEDKWLAEGIAGIQHNAFFMHRALDANNLREVLKYSALMLSELRTSKLSPQKYYDLYMRAFDQLRQLEIFFKDESRHGLPVVDLYELVQHAGNILPRMYLLCTVGSVYIKSKQAPSKDVLKDLVEMCRGVQHPIRGLFLRSYLAQVSRDKLPEIGSDYEGDANTVMDAVEFVLQNFTEMNKLWVRIQHQGPGTVREKQEKERNELRDLVGKNLHVLGQIEGVDLEMYKETVLPRVLEQVVNCKDKLAQYYLMECIIQVFPDEYHLQTLETLLAACTQLMPTVDTKIVLTQLMDRLSNYAASSPDVLHEFLQVEAFAKLSNAIGKVIDTQLEMPIVGAMTLFVSLLTFTLRVHPDRLDYVDQVLGACVVKLSSVPKLEDARAMKQVVALLSAPLEKYSDIVTALTLSNYPRVMDHLDDGTNKVMAMLIIQSIMKTDSCISTADKVEVLFELIKGLIKDLDETNAEELDEEDFQEEQNSVARLIHMLDNEEPEEMLKIICVVRRHLMTGGPRRLPFTVPPLVFSAVRLVRQLESQGGDIAGEDSATPRKIFQILNQTIEVLTSVPCPELALRLYLQCAEAASDCDLEPVAYEFFTQAFMLYEEEIADSKAQVTAIHLIVGTLQRINVFGVENRDTLTHKATGYSARLLKKPDQCRAVYACSHLFWVDDPDGIKDGERVLLCLRRALRIANAAQQMASATRGSSGPVTLFVEILNKYIYFFEKGNPHITPSDIQSLIELINNEMQSDNGNTTIHSDPFFTSTLRYIKFIKQKGGLMGEKYDPIKL</sequence>
<feature type="chain" id="PRO_0000414725" description="Vacuolar protein sorting-associated protein 35B">
    <location>
        <begin position="1"/>
        <end position="790"/>
    </location>
</feature>
<feature type="sequence conflict" description="In Ref. 3; BAF00109." evidence="3" ref="3">
    <original>K</original>
    <variation>R</variation>
    <location>
        <position position="293"/>
    </location>
</feature>
<gene>
    <name type="primary">VPS35B</name>
    <name type="ordered locus">At1g75850</name>
    <name type="ORF">T4O12.9</name>
</gene>
<evidence type="ECO:0000250" key="1"/>
<evidence type="ECO:0000269" key="2">
    <source>
    </source>
</evidence>
<evidence type="ECO:0000305" key="3"/>
<organism>
    <name type="scientific">Arabidopsis thaliana</name>
    <name type="common">Mouse-ear cress</name>
    <dbReference type="NCBI Taxonomy" id="3702"/>
    <lineage>
        <taxon>Eukaryota</taxon>
        <taxon>Viridiplantae</taxon>
        <taxon>Streptophyta</taxon>
        <taxon>Embryophyta</taxon>
        <taxon>Tracheophyta</taxon>
        <taxon>Spermatophyta</taxon>
        <taxon>Magnoliopsida</taxon>
        <taxon>eudicotyledons</taxon>
        <taxon>Gunneridae</taxon>
        <taxon>Pentapetalae</taxon>
        <taxon>rosids</taxon>
        <taxon>malvids</taxon>
        <taxon>Brassicales</taxon>
        <taxon>Brassicaceae</taxon>
        <taxon>Camelineae</taxon>
        <taxon>Arabidopsis</taxon>
    </lineage>
</organism>
<accession>F4I0P8</accession>
<accession>Q0WRZ0</accession>
<accession>Q9LQS9</accession>
<keyword id="KW-0963">Cytoplasm</keyword>
<keyword id="KW-0967">Endosome</keyword>
<keyword id="KW-0333">Golgi apparatus</keyword>
<keyword id="KW-0472">Membrane</keyword>
<keyword id="KW-0653">Protein transport</keyword>
<keyword id="KW-1185">Reference proteome</keyword>
<keyword id="KW-0813">Transport</keyword>